<protein>
    <recommendedName>
        <fullName>Zinc finger matrin-type protein 2</fullName>
    </recommendedName>
</protein>
<gene>
    <name type="primary">ZMAT2</name>
</gene>
<reference key="1">
    <citation type="journal article" date="2004" name="Nat. Genet.">
        <title>Complete sequencing and characterization of 21,243 full-length human cDNAs.</title>
        <authorList>
            <person name="Ota T."/>
            <person name="Suzuki Y."/>
            <person name="Nishikawa T."/>
            <person name="Otsuki T."/>
            <person name="Sugiyama T."/>
            <person name="Irie R."/>
            <person name="Wakamatsu A."/>
            <person name="Hayashi K."/>
            <person name="Sato H."/>
            <person name="Nagai K."/>
            <person name="Kimura K."/>
            <person name="Makita H."/>
            <person name="Sekine M."/>
            <person name="Obayashi M."/>
            <person name="Nishi T."/>
            <person name="Shibahara T."/>
            <person name="Tanaka T."/>
            <person name="Ishii S."/>
            <person name="Yamamoto J."/>
            <person name="Saito K."/>
            <person name="Kawai Y."/>
            <person name="Isono Y."/>
            <person name="Nakamura Y."/>
            <person name="Nagahari K."/>
            <person name="Murakami K."/>
            <person name="Yasuda T."/>
            <person name="Iwayanagi T."/>
            <person name="Wagatsuma M."/>
            <person name="Shiratori A."/>
            <person name="Sudo H."/>
            <person name="Hosoiri T."/>
            <person name="Kaku Y."/>
            <person name="Kodaira H."/>
            <person name="Kondo H."/>
            <person name="Sugawara M."/>
            <person name="Takahashi M."/>
            <person name="Kanda K."/>
            <person name="Yokoi T."/>
            <person name="Furuya T."/>
            <person name="Kikkawa E."/>
            <person name="Omura Y."/>
            <person name="Abe K."/>
            <person name="Kamihara K."/>
            <person name="Katsuta N."/>
            <person name="Sato K."/>
            <person name="Tanikawa M."/>
            <person name="Yamazaki M."/>
            <person name="Ninomiya K."/>
            <person name="Ishibashi T."/>
            <person name="Yamashita H."/>
            <person name="Murakawa K."/>
            <person name="Fujimori K."/>
            <person name="Tanai H."/>
            <person name="Kimata M."/>
            <person name="Watanabe M."/>
            <person name="Hiraoka S."/>
            <person name="Chiba Y."/>
            <person name="Ishida S."/>
            <person name="Ono Y."/>
            <person name="Takiguchi S."/>
            <person name="Watanabe S."/>
            <person name="Yosida M."/>
            <person name="Hotuta T."/>
            <person name="Kusano J."/>
            <person name="Kanehori K."/>
            <person name="Takahashi-Fujii A."/>
            <person name="Hara H."/>
            <person name="Tanase T.-O."/>
            <person name="Nomura Y."/>
            <person name="Togiya S."/>
            <person name="Komai F."/>
            <person name="Hara R."/>
            <person name="Takeuchi K."/>
            <person name="Arita M."/>
            <person name="Imose N."/>
            <person name="Musashino K."/>
            <person name="Yuuki H."/>
            <person name="Oshima A."/>
            <person name="Sasaki N."/>
            <person name="Aotsuka S."/>
            <person name="Yoshikawa Y."/>
            <person name="Matsunawa H."/>
            <person name="Ichihara T."/>
            <person name="Shiohata N."/>
            <person name="Sano S."/>
            <person name="Moriya S."/>
            <person name="Momiyama H."/>
            <person name="Satoh N."/>
            <person name="Takami S."/>
            <person name="Terashima Y."/>
            <person name="Suzuki O."/>
            <person name="Nakagawa S."/>
            <person name="Senoh A."/>
            <person name="Mizoguchi H."/>
            <person name="Goto Y."/>
            <person name="Shimizu F."/>
            <person name="Wakebe H."/>
            <person name="Hishigaki H."/>
            <person name="Watanabe T."/>
            <person name="Sugiyama A."/>
            <person name="Takemoto M."/>
            <person name="Kawakami B."/>
            <person name="Yamazaki M."/>
            <person name="Watanabe K."/>
            <person name="Kumagai A."/>
            <person name="Itakura S."/>
            <person name="Fukuzumi Y."/>
            <person name="Fujimori Y."/>
            <person name="Komiyama M."/>
            <person name="Tashiro H."/>
            <person name="Tanigami A."/>
            <person name="Fujiwara T."/>
            <person name="Ono T."/>
            <person name="Yamada K."/>
            <person name="Fujii Y."/>
            <person name="Ozaki K."/>
            <person name="Hirao M."/>
            <person name="Ohmori Y."/>
            <person name="Kawabata A."/>
            <person name="Hikiji T."/>
            <person name="Kobatake N."/>
            <person name="Inagaki H."/>
            <person name="Ikema Y."/>
            <person name="Okamoto S."/>
            <person name="Okitani R."/>
            <person name="Kawakami T."/>
            <person name="Noguchi S."/>
            <person name="Itoh T."/>
            <person name="Shigeta K."/>
            <person name="Senba T."/>
            <person name="Matsumura K."/>
            <person name="Nakajima Y."/>
            <person name="Mizuno T."/>
            <person name="Morinaga M."/>
            <person name="Sasaki M."/>
            <person name="Togashi T."/>
            <person name="Oyama M."/>
            <person name="Hata H."/>
            <person name="Watanabe M."/>
            <person name="Komatsu T."/>
            <person name="Mizushima-Sugano J."/>
            <person name="Satoh T."/>
            <person name="Shirai Y."/>
            <person name="Takahashi Y."/>
            <person name="Nakagawa K."/>
            <person name="Okumura K."/>
            <person name="Nagase T."/>
            <person name="Nomura N."/>
            <person name="Kikuchi H."/>
            <person name="Masuho Y."/>
            <person name="Yamashita R."/>
            <person name="Nakai K."/>
            <person name="Yada T."/>
            <person name="Nakamura Y."/>
            <person name="Ohara O."/>
            <person name="Isogai T."/>
            <person name="Sugano S."/>
        </authorList>
    </citation>
    <scope>NUCLEOTIDE SEQUENCE [LARGE SCALE MRNA]</scope>
</reference>
<reference key="2">
    <citation type="journal article" date="2004" name="Genome Res.">
        <title>The status, quality, and expansion of the NIH full-length cDNA project: the Mammalian Gene Collection (MGC).</title>
        <authorList>
            <consortium name="The MGC Project Team"/>
        </authorList>
    </citation>
    <scope>NUCLEOTIDE SEQUENCE [LARGE SCALE MRNA]</scope>
    <source>
        <tissue>Testis</tissue>
    </source>
</reference>
<reference key="3">
    <citation type="journal article" date="2011" name="BMC Syst. Biol.">
        <title>Initial characterization of the human central proteome.</title>
        <authorList>
            <person name="Burkard T.R."/>
            <person name="Planyavsky M."/>
            <person name="Kaupe I."/>
            <person name="Breitwieser F.P."/>
            <person name="Buerckstuemmer T."/>
            <person name="Bennett K.L."/>
            <person name="Superti-Furga G."/>
            <person name="Colinge J."/>
        </authorList>
    </citation>
    <scope>IDENTIFICATION BY MASS SPECTROMETRY [LARGE SCALE ANALYSIS]</scope>
</reference>
<reference key="4">
    <citation type="journal article" date="2012" name="Proc. Natl. Acad. Sci. U.S.A.">
        <title>N-terminal acetylome analyses and functional insights of the N-terminal acetyltransferase NatB.</title>
        <authorList>
            <person name="Van Damme P."/>
            <person name="Lasa M."/>
            <person name="Polevoda B."/>
            <person name="Gazquez C."/>
            <person name="Elosegui-Artola A."/>
            <person name="Kim D.S."/>
            <person name="De Juan-Pardo E."/>
            <person name="Demeyer K."/>
            <person name="Hole K."/>
            <person name="Larrea E."/>
            <person name="Timmerman E."/>
            <person name="Prieto J."/>
            <person name="Arnesen T."/>
            <person name="Sherman F."/>
            <person name="Gevaert K."/>
            <person name="Aldabe R."/>
        </authorList>
    </citation>
    <scope>ACETYLATION [LARGE SCALE ANALYSIS] AT ALA-2</scope>
    <scope>CLEAVAGE OF INITIATOR METHIONINE [LARGE SCALE ANALYSIS]</scope>
    <scope>IDENTIFICATION BY MASS SPECTROMETRY [LARGE SCALE ANALYSIS]</scope>
</reference>
<reference key="5">
    <citation type="journal article" date="2014" name="J. Proteomics">
        <title>An enzyme assisted RP-RPLC approach for in-depth analysis of human liver phosphoproteome.</title>
        <authorList>
            <person name="Bian Y."/>
            <person name="Song C."/>
            <person name="Cheng K."/>
            <person name="Dong M."/>
            <person name="Wang F."/>
            <person name="Huang J."/>
            <person name="Sun D."/>
            <person name="Wang L."/>
            <person name="Ye M."/>
            <person name="Zou H."/>
        </authorList>
    </citation>
    <scope>IDENTIFICATION BY MASS SPECTROMETRY [LARGE SCALE ANALYSIS]</scope>
    <source>
        <tissue>Liver</tissue>
    </source>
</reference>
<reference key="6">
    <citation type="journal article" date="2015" name="Cell Rep.">
        <title>SUMO-2 orchestrates chromatin modifiers in response to DNA damage.</title>
        <authorList>
            <person name="Hendriks I.A."/>
            <person name="Treffers L.W."/>
            <person name="Verlaan-de Vries M."/>
            <person name="Olsen J.V."/>
            <person name="Vertegaal A.C."/>
        </authorList>
    </citation>
    <scope>SUMOYLATION [LARGE SCALE ANALYSIS] AT LYS-45 AND LYS-64</scope>
    <scope>IDENTIFICATION BY MASS SPECTROMETRY [LARGE SCALE ANALYSIS]</scope>
</reference>
<reference key="7">
    <citation type="journal article" date="2017" name="Nat. Struct. Mol. Biol.">
        <title>Site-specific mapping of the human SUMO proteome reveals co-modification with phosphorylation.</title>
        <authorList>
            <person name="Hendriks I.A."/>
            <person name="Lyon D."/>
            <person name="Young C."/>
            <person name="Jensen L.J."/>
            <person name="Vertegaal A.C."/>
            <person name="Nielsen M.L."/>
        </authorList>
    </citation>
    <scope>SUMOYLATION [LARGE SCALE ANALYSIS] AT LYS-8; LYS-36; LYS-39; LYS-45; LYS-55; LYS-61; LYS-64; LYS-70; LYS-102 AND LYS-123</scope>
    <scope>IDENTIFICATION BY MASS SPECTROMETRY [LARGE SCALE ANALYSIS]</scope>
</reference>
<reference evidence="3" key="8">
    <citation type="journal article" date="2017" name="Cell">
        <title>Cryo-EM Structure of a Pre-catalytic Human Spliceosome Primed for Activation.</title>
        <authorList>
            <person name="Bertram K."/>
            <person name="Agafonov D.E."/>
            <person name="Dybkov O."/>
            <person name="Haselbach D."/>
            <person name="Leelaram M.N."/>
            <person name="Will C.L."/>
            <person name="Urlaub H."/>
            <person name="Kastner B."/>
            <person name="Luhrmann R."/>
            <person name="Stark H."/>
        </authorList>
    </citation>
    <scope>STRUCTURE BY ELECTRON MICROSCOPY (4.50 ANGSTROMS)</scope>
    <scope>FUNCTION</scope>
    <scope>SUBUNIT</scope>
    <scope>SUBCELLULAR LOCATION</scope>
</reference>
<dbReference type="EMBL" id="AK055683">
    <property type="protein sequence ID" value="BAB70983.1"/>
    <property type="molecule type" value="mRNA"/>
</dbReference>
<dbReference type="EMBL" id="BC056668">
    <property type="protein sequence ID" value="AAH56668.1"/>
    <property type="molecule type" value="mRNA"/>
</dbReference>
<dbReference type="CCDS" id="CCDS4239.1"/>
<dbReference type="RefSeq" id="NP_653324.1">
    <property type="nucleotide sequence ID" value="NM_144723.3"/>
</dbReference>
<dbReference type="PDB" id="5O9Z">
    <property type="method" value="EM"/>
    <property type="resolution" value="4.50 A"/>
    <property type="chains" value="N=1-199"/>
</dbReference>
<dbReference type="PDB" id="6AHD">
    <property type="method" value="EM"/>
    <property type="resolution" value="3.80 A"/>
    <property type="chains" value="8=1-199"/>
</dbReference>
<dbReference type="PDB" id="7AAV">
    <property type="method" value="EM"/>
    <property type="resolution" value="4.20 A"/>
    <property type="chains" value="N=1-199"/>
</dbReference>
<dbReference type="PDB" id="7ABF">
    <property type="method" value="EM"/>
    <property type="resolution" value="3.90 A"/>
    <property type="chains" value="N=1-199"/>
</dbReference>
<dbReference type="PDB" id="7ABG">
    <property type="method" value="EM"/>
    <property type="resolution" value="7.80 A"/>
    <property type="chains" value="N=1-199"/>
</dbReference>
<dbReference type="PDB" id="7ABI">
    <property type="method" value="EM"/>
    <property type="resolution" value="8.00 A"/>
    <property type="chains" value="N=1-199"/>
</dbReference>
<dbReference type="PDB" id="8H6K">
    <property type="method" value="EM"/>
    <property type="resolution" value="2.70 A"/>
    <property type="chains" value="4N=1-199"/>
</dbReference>
<dbReference type="PDB" id="8Q7N">
    <property type="method" value="EM"/>
    <property type="resolution" value="3.10 A"/>
    <property type="chains" value="r=1-199"/>
</dbReference>
<dbReference type="PDB" id="8QO9">
    <property type="method" value="EM"/>
    <property type="resolution" value="5.29 A"/>
    <property type="chains" value="r=1-199"/>
</dbReference>
<dbReference type="PDB" id="8QPE">
    <property type="method" value="EM"/>
    <property type="resolution" value="3.10 A"/>
    <property type="chains" value="r=1-199"/>
</dbReference>
<dbReference type="PDB" id="8QZS">
    <property type="method" value="EM"/>
    <property type="resolution" value="4.10 A"/>
    <property type="chains" value="r=1-199"/>
</dbReference>
<dbReference type="PDBsum" id="5O9Z"/>
<dbReference type="PDBsum" id="6AHD"/>
<dbReference type="PDBsum" id="7AAV"/>
<dbReference type="PDBsum" id="7ABF"/>
<dbReference type="PDBsum" id="7ABG"/>
<dbReference type="PDBsum" id="7ABI"/>
<dbReference type="PDBsum" id="8H6K"/>
<dbReference type="PDBsum" id="8Q7N"/>
<dbReference type="PDBsum" id="8QO9"/>
<dbReference type="PDBsum" id="8QPE"/>
<dbReference type="PDBsum" id="8QZS"/>
<dbReference type="EMDB" id="EMD-11693"/>
<dbReference type="EMDB" id="EMD-11694"/>
<dbReference type="EMDB" id="EMD-11695"/>
<dbReference type="EMDB" id="EMD-11697"/>
<dbReference type="EMDB" id="EMD-18225"/>
<dbReference type="EMDB" id="EMD-18529"/>
<dbReference type="EMDB" id="EMD-18548"/>
<dbReference type="EMDB" id="EMD-18781"/>
<dbReference type="EMDB" id="EMD-34507"/>
<dbReference type="EMDB" id="EMD-3766"/>
<dbReference type="EMDB" id="EMD-9624"/>
<dbReference type="SMR" id="Q96NC0"/>
<dbReference type="BioGRID" id="127499">
    <property type="interactions" value="140"/>
</dbReference>
<dbReference type="CORUM" id="Q96NC0"/>
<dbReference type="FunCoup" id="Q96NC0">
    <property type="interactions" value="1902"/>
</dbReference>
<dbReference type="IntAct" id="Q96NC0">
    <property type="interactions" value="80"/>
</dbReference>
<dbReference type="MINT" id="Q96NC0"/>
<dbReference type="STRING" id="9606.ENSP00000274712"/>
<dbReference type="iPTMnet" id="Q96NC0"/>
<dbReference type="PhosphoSitePlus" id="Q96NC0"/>
<dbReference type="BioMuta" id="ZMAT2"/>
<dbReference type="DMDM" id="52783532"/>
<dbReference type="jPOST" id="Q96NC0"/>
<dbReference type="MassIVE" id="Q96NC0"/>
<dbReference type="PaxDb" id="9606-ENSP00000274712"/>
<dbReference type="PeptideAtlas" id="Q96NC0"/>
<dbReference type="ProteomicsDB" id="77501"/>
<dbReference type="Pumba" id="Q96NC0"/>
<dbReference type="TopDownProteomics" id="Q96NC0"/>
<dbReference type="Antibodypedia" id="27104">
    <property type="antibodies" value="166 antibodies from 24 providers"/>
</dbReference>
<dbReference type="DNASU" id="153527"/>
<dbReference type="Ensembl" id="ENST00000274712.8">
    <property type="protein sequence ID" value="ENSP00000274712.2"/>
    <property type="gene ID" value="ENSG00000146007.11"/>
</dbReference>
<dbReference type="GeneID" id="153527"/>
<dbReference type="KEGG" id="hsa:153527"/>
<dbReference type="MANE-Select" id="ENST00000274712.8">
    <property type="protein sequence ID" value="ENSP00000274712.2"/>
    <property type="RefSeq nucleotide sequence ID" value="NM_144723.3"/>
    <property type="RefSeq protein sequence ID" value="NP_653324.1"/>
</dbReference>
<dbReference type="UCSC" id="uc003lgy.2">
    <property type="organism name" value="human"/>
</dbReference>
<dbReference type="AGR" id="HGNC:26433"/>
<dbReference type="CTD" id="153527"/>
<dbReference type="DisGeNET" id="153527"/>
<dbReference type="GeneCards" id="ZMAT2"/>
<dbReference type="HGNC" id="HGNC:26433">
    <property type="gene designation" value="ZMAT2"/>
</dbReference>
<dbReference type="HPA" id="ENSG00000146007">
    <property type="expression patterns" value="Low tissue specificity"/>
</dbReference>
<dbReference type="MIM" id="619930">
    <property type="type" value="gene"/>
</dbReference>
<dbReference type="neXtProt" id="NX_Q96NC0"/>
<dbReference type="OpenTargets" id="ENSG00000146007"/>
<dbReference type="PharmGKB" id="PA134931664"/>
<dbReference type="VEuPathDB" id="HostDB:ENSG00000146007"/>
<dbReference type="eggNOG" id="KOG4727">
    <property type="taxonomic scope" value="Eukaryota"/>
</dbReference>
<dbReference type="GeneTree" id="ENSGT00390000010712"/>
<dbReference type="HOGENOM" id="CLU_067237_1_1_1"/>
<dbReference type="InParanoid" id="Q96NC0"/>
<dbReference type="OMA" id="VDHRRKW"/>
<dbReference type="OrthoDB" id="30343at2759"/>
<dbReference type="PAN-GO" id="Q96NC0">
    <property type="GO annotations" value="2 GO annotations based on evolutionary models"/>
</dbReference>
<dbReference type="PhylomeDB" id="Q96NC0"/>
<dbReference type="TreeFam" id="TF314475"/>
<dbReference type="PathwayCommons" id="Q96NC0"/>
<dbReference type="Reactome" id="R-HSA-72163">
    <property type="pathway name" value="mRNA Splicing - Major Pathway"/>
</dbReference>
<dbReference type="SignaLink" id="Q96NC0"/>
<dbReference type="BioGRID-ORCS" id="153527">
    <property type="hits" value="576 hits in 1165 CRISPR screens"/>
</dbReference>
<dbReference type="CD-CODE" id="91857CE7">
    <property type="entry name" value="Nucleolus"/>
</dbReference>
<dbReference type="ChiTaRS" id="ZMAT2">
    <property type="organism name" value="human"/>
</dbReference>
<dbReference type="GenomeRNAi" id="153527"/>
<dbReference type="Pharos" id="Q96NC0">
    <property type="development level" value="Tbio"/>
</dbReference>
<dbReference type="PRO" id="PR:Q96NC0"/>
<dbReference type="Proteomes" id="UP000005640">
    <property type="component" value="Chromosome 5"/>
</dbReference>
<dbReference type="RNAct" id="Q96NC0">
    <property type="molecule type" value="protein"/>
</dbReference>
<dbReference type="Bgee" id="ENSG00000146007">
    <property type="expression patterns" value="Expressed in cortical plate and 183 other cell types or tissues"/>
</dbReference>
<dbReference type="ExpressionAtlas" id="Q96NC0">
    <property type="expression patterns" value="baseline and differential"/>
</dbReference>
<dbReference type="GO" id="GO:0005654">
    <property type="term" value="C:nucleoplasm"/>
    <property type="evidence" value="ECO:0000304"/>
    <property type="project" value="Reactome"/>
</dbReference>
<dbReference type="GO" id="GO:0005634">
    <property type="term" value="C:nucleus"/>
    <property type="evidence" value="ECO:0000314"/>
    <property type="project" value="UniProtKB"/>
</dbReference>
<dbReference type="GO" id="GO:0071005">
    <property type="term" value="C:U2-type precatalytic spliceosome"/>
    <property type="evidence" value="ECO:0000314"/>
    <property type="project" value="UniProtKB"/>
</dbReference>
<dbReference type="GO" id="GO:0046540">
    <property type="term" value="C:U4/U6 x U5 tri-snRNP complex"/>
    <property type="evidence" value="ECO:0000318"/>
    <property type="project" value="GO_Central"/>
</dbReference>
<dbReference type="GO" id="GO:0003677">
    <property type="term" value="F:DNA binding"/>
    <property type="evidence" value="ECO:0007669"/>
    <property type="project" value="UniProtKB-KW"/>
</dbReference>
<dbReference type="GO" id="GO:0008270">
    <property type="term" value="F:zinc ion binding"/>
    <property type="evidence" value="ECO:0007669"/>
    <property type="project" value="UniProtKB-KW"/>
</dbReference>
<dbReference type="GO" id="GO:0000398">
    <property type="term" value="P:mRNA splicing, via spliceosome"/>
    <property type="evidence" value="ECO:0000314"/>
    <property type="project" value="UniProtKB"/>
</dbReference>
<dbReference type="FunFam" id="3.30.160.60:FF:000282">
    <property type="entry name" value="Zinc finger, matrin-type 2"/>
    <property type="match status" value="1"/>
</dbReference>
<dbReference type="Gene3D" id="3.30.160.60">
    <property type="entry name" value="Classic Zinc Finger"/>
    <property type="match status" value="1"/>
</dbReference>
<dbReference type="InterPro" id="IPR003604">
    <property type="entry name" value="Matrin/U1-like-C_Znf_C2H2"/>
</dbReference>
<dbReference type="InterPro" id="IPR040107">
    <property type="entry name" value="Snu23"/>
</dbReference>
<dbReference type="InterPro" id="IPR022755">
    <property type="entry name" value="Znf_C2H2_jaz"/>
</dbReference>
<dbReference type="InterPro" id="IPR036236">
    <property type="entry name" value="Znf_C2H2_sf"/>
</dbReference>
<dbReference type="PANTHER" id="PTHR45986">
    <property type="entry name" value="ZINC FINGER MATRIN-TYPE PROTEIN 2"/>
    <property type="match status" value="1"/>
</dbReference>
<dbReference type="PANTHER" id="PTHR45986:SF1">
    <property type="entry name" value="ZINC FINGER MATRIN-TYPE PROTEIN 2"/>
    <property type="match status" value="1"/>
</dbReference>
<dbReference type="Pfam" id="PF12171">
    <property type="entry name" value="zf-C2H2_jaz"/>
    <property type="match status" value="1"/>
</dbReference>
<dbReference type="SMART" id="SM00451">
    <property type="entry name" value="ZnF_U1"/>
    <property type="match status" value="1"/>
</dbReference>
<dbReference type="SUPFAM" id="SSF57667">
    <property type="entry name" value="beta-beta-alpha zinc fingers"/>
    <property type="match status" value="1"/>
</dbReference>
<proteinExistence type="evidence at protein level"/>
<name>ZMAT2_HUMAN</name>
<sequence>MASGSGTKNLDFRRKWDKDEYEKLAEKRLTEEREKKDGKPVQPVKRELLRHRDYKVDLESKLGKTIVITKTTPQSEMGGYYCNVCDCVVKDSINFLDHINGKKHQRNLGMSMRVERSTLDQVKKRFEVNKKKMEEKQKDYDFEERMKELREEEEKAKAYKKEKQKEKKRRAEEDLTFEEDDEMAAVMGFSGFGSTKKSY</sequence>
<comment type="function">
    <text evidence="2">Involved in pre-mRNA splicing as a component of the spliceosome.</text>
</comment>
<comment type="subunit">
    <text evidence="2">Component of the spliceosome B complex.</text>
</comment>
<comment type="interaction">
    <interactant intactId="EBI-2682299">
        <id>Q96NC0</id>
    </interactant>
    <interactant intactId="EBI-8466265">
        <id>Q96MA6</id>
        <label>AK8</label>
    </interactant>
    <organismsDiffer>false</organismsDiffer>
    <experiments>3</experiments>
</comment>
<comment type="interaction">
    <interactant intactId="EBI-2682299">
        <id>Q96NC0</id>
    </interactant>
    <interactant intactId="EBI-21535880">
        <id>Q92870-2</id>
        <label>APBB2</label>
    </interactant>
    <organismsDiffer>false</organismsDiffer>
    <experiments>3</experiments>
</comment>
<comment type="interaction">
    <interactant intactId="EBI-2682299">
        <id>Q96NC0</id>
    </interactant>
    <interactant intactId="EBI-930964">
        <id>P54253</id>
        <label>ATXN1</label>
    </interactant>
    <organismsDiffer>false</organismsDiffer>
    <experiments>6</experiments>
</comment>
<comment type="interaction">
    <interactant intactId="EBI-2682299">
        <id>Q96NC0</id>
    </interactant>
    <interactant intactId="EBI-946046">
        <id>P54252</id>
        <label>ATXN3</label>
    </interactant>
    <organismsDiffer>false</organismsDiffer>
    <experiments>3</experiments>
</comment>
<comment type="interaction">
    <interactant intactId="EBI-2682299">
        <id>Q96NC0</id>
    </interactant>
    <interactant intactId="EBI-11975051">
        <id>Q8TD16-2</id>
        <label>BICD2</label>
    </interactant>
    <organismsDiffer>false</organismsDiffer>
    <experiments>3</experiments>
</comment>
<comment type="interaction">
    <interactant intactId="EBI-2682299">
        <id>Q96NC0</id>
    </interactant>
    <interactant intactId="EBI-749920">
        <id>Q9P1Z2</id>
        <label>CALCOCO1</label>
    </interactant>
    <organismsDiffer>false</organismsDiffer>
    <experiments>3</experiments>
</comment>
<comment type="interaction">
    <interactant intactId="EBI-2682299">
        <id>Q96NC0</id>
    </interactant>
    <interactant intactId="EBI-741724">
        <id>Q8NA61</id>
        <label>CBY2</label>
    </interactant>
    <organismsDiffer>false</organismsDiffer>
    <experiments>3</experiments>
</comment>
<comment type="interaction">
    <interactant intactId="EBI-2682299">
        <id>Q96NC0</id>
    </interactant>
    <interactant intactId="EBI-2808286">
        <id>Q2TAC2</id>
        <label>CCDC57</label>
    </interactant>
    <organismsDiffer>false</organismsDiffer>
    <experiments>3</experiments>
</comment>
<comment type="interaction">
    <interactant intactId="EBI-2682299">
        <id>Q96NC0</id>
    </interactant>
    <interactant intactId="EBI-1181367">
        <id>Q01850</id>
        <label>CDR2</label>
    </interactant>
    <organismsDiffer>false</organismsDiffer>
    <experiments>3</experiments>
</comment>
<comment type="interaction">
    <interactant intactId="EBI-2682299">
        <id>Q96NC0</id>
    </interactant>
    <interactant intactId="EBI-742887">
        <id>Q8TAP6</id>
        <label>CEP76</label>
    </interactant>
    <organismsDiffer>false</organismsDiffer>
    <experiments>3</experiments>
</comment>
<comment type="interaction">
    <interactant intactId="EBI-2682299">
        <id>Q96NC0</id>
    </interactant>
    <interactant intactId="EBI-5661036">
        <id>A1L4K1</id>
        <label>FSD2</label>
    </interactant>
    <organismsDiffer>false</organismsDiffer>
    <experiments>3</experiments>
</comment>
<comment type="interaction">
    <interactant intactId="EBI-2682299">
        <id>Q96NC0</id>
    </interactant>
    <interactant intactId="EBI-11022345">
        <id>P51114-2</id>
        <label>FXR1</label>
    </interactant>
    <organismsDiffer>false</organismsDiffer>
    <experiments>3</experiments>
</comment>
<comment type="interaction">
    <interactant intactId="EBI-2682299">
        <id>Q96NC0</id>
    </interactant>
    <interactant intactId="EBI-740459">
        <id>P51116</id>
        <label>FXR2</label>
    </interactant>
    <organismsDiffer>false</organismsDiffer>
    <experiments>6</experiments>
</comment>
<comment type="interaction">
    <interactant intactId="EBI-2682299">
        <id>Q96NC0</id>
    </interactant>
    <interactant intactId="EBI-618309">
        <id>Q08379</id>
        <label>GOLGA2</label>
    </interactant>
    <organismsDiffer>false</organismsDiffer>
    <experiments>6</experiments>
</comment>
<comment type="interaction">
    <interactant intactId="EBI-2682299">
        <id>Q96NC0</id>
    </interactant>
    <interactant intactId="EBI-5916454">
        <id>A6NEM1</id>
        <label>GOLGA6L9</label>
    </interactant>
    <organismsDiffer>false</organismsDiffer>
    <experiments>3</experiments>
</comment>
<comment type="interaction">
    <interactant intactId="EBI-2682299">
        <id>Q96NC0</id>
    </interactant>
    <interactant intactId="EBI-717919">
        <id>Q4V328</id>
        <label>GRIPAP1</label>
    </interactant>
    <organismsDiffer>false</organismsDiffer>
    <experiments>3</experiments>
</comment>
<comment type="interaction">
    <interactant intactId="EBI-2682299">
        <id>Q96NC0</id>
    </interactant>
    <interactant intactId="EBI-712814">
        <id>P54257</id>
        <label>HAP1</label>
    </interactant>
    <organismsDiffer>false</organismsDiffer>
    <experiments>3</experiments>
</comment>
<comment type="interaction">
    <interactant intactId="EBI-2682299">
        <id>Q96NC0</id>
    </interactant>
    <interactant intactId="EBI-2549423">
        <id>Q6NT76</id>
        <label>HMBOX1</label>
    </interactant>
    <organismsDiffer>false</organismsDiffer>
    <experiments>3</experiments>
</comment>
<comment type="interaction">
    <interactant intactId="EBI-2682299">
        <id>Q96NC0</id>
    </interactant>
    <interactant intactId="EBI-466029">
        <id>P42858</id>
        <label>HTT</label>
    </interactant>
    <organismsDiffer>false</organismsDiffer>
    <experiments>20</experiments>
</comment>
<comment type="interaction">
    <interactant intactId="EBI-2682299">
        <id>Q96NC0</id>
    </interactant>
    <interactant intactId="EBI-745305">
        <id>Q13422</id>
        <label>IKZF1</label>
    </interactant>
    <organismsDiffer>false</organismsDiffer>
    <experiments>3</experiments>
</comment>
<comment type="interaction">
    <interactant intactId="EBI-2682299">
        <id>Q96NC0</id>
    </interactant>
    <interactant intactId="EBI-2556193">
        <id>Q63ZY3</id>
        <label>KANK2</label>
    </interactant>
    <organismsDiffer>false</organismsDiffer>
    <experiments>3</experiments>
</comment>
<comment type="interaction">
    <interactant intactId="EBI-2682299">
        <id>Q96NC0</id>
    </interactant>
    <interactant intactId="EBI-10171697">
        <id>Q6A162</id>
        <label>KRT40</label>
    </interactant>
    <organismsDiffer>false</organismsDiffer>
    <experiments>3</experiments>
</comment>
<comment type="interaction">
    <interactant intactId="EBI-2682299">
        <id>Q96NC0</id>
    </interactant>
    <interactant intactId="EBI-741037">
        <id>Q9BRK4</id>
        <label>LZTS2</label>
    </interactant>
    <organismsDiffer>false</organismsDiffer>
    <experiments>3</experiments>
</comment>
<comment type="interaction">
    <interactant intactId="EBI-2682299">
        <id>Q96NC0</id>
    </interactant>
    <interactant intactId="EBI-748397">
        <id>P50222</id>
        <label>MEOX2</label>
    </interactant>
    <organismsDiffer>false</organismsDiffer>
    <experiments>3</experiments>
</comment>
<comment type="interaction">
    <interactant intactId="EBI-2682299">
        <id>Q96NC0</id>
    </interactant>
    <interactant intactId="EBI-742948">
        <id>Q5JR59</id>
        <label>MTUS2</label>
    </interactant>
    <organismsDiffer>false</organismsDiffer>
    <experiments>3</experiments>
</comment>
<comment type="interaction">
    <interactant intactId="EBI-2682299">
        <id>Q96NC0</id>
    </interactant>
    <interactant intactId="EBI-11522433">
        <id>Q5JR59-3</id>
        <label>MTUS2</label>
    </interactant>
    <organismsDiffer>false</organismsDiffer>
    <experiments>3</experiments>
</comment>
<comment type="interaction">
    <interactant intactId="EBI-2682299">
        <id>Q96NC0</id>
    </interactant>
    <interactant intactId="EBI-8641936">
        <id>Q15742</id>
        <label>NAB2</label>
    </interactant>
    <organismsDiffer>false</organismsDiffer>
    <experiments>3</experiments>
</comment>
<comment type="interaction">
    <interactant intactId="EBI-2682299">
        <id>Q96NC0</id>
    </interactant>
    <interactant intactId="EBI-716486">
        <id>Q92597</id>
        <label>NDRG1</label>
    </interactant>
    <organismsDiffer>false</organismsDiffer>
    <experiments>3</experiments>
</comment>
<comment type="interaction">
    <interactant intactId="EBI-2682299">
        <id>Q96NC0</id>
    </interactant>
    <interactant intactId="EBI-591778">
        <id>P61970</id>
        <label>NUTF2</label>
    </interactant>
    <organismsDiffer>false</organismsDiffer>
    <experiments>3</experiments>
</comment>
<comment type="interaction">
    <interactant intactId="EBI-2682299">
        <id>Q96NC0</id>
    </interactant>
    <interactant intactId="EBI-748974">
        <id>Q96CV9</id>
        <label>OPTN</label>
    </interactant>
    <organismsDiffer>false</organismsDiffer>
    <experiments>4</experiments>
</comment>
<comment type="interaction">
    <interactant intactId="EBI-2682299">
        <id>Q96NC0</id>
    </interactant>
    <interactant intactId="EBI-752057">
        <id>Q7Z412</id>
        <label>PEX26</label>
    </interactant>
    <organismsDiffer>false</organismsDiffer>
    <experiments>3</experiments>
</comment>
<comment type="interaction">
    <interactant intactId="EBI-2682299">
        <id>Q96NC0</id>
    </interactant>
    <interactant intactId="EBI-713786">
        <id>Q8IXK0</id>
        <label>PHC2</label>
    </interactant>
    <organismsDiffer>false</organismsDiffer>
    <experiments>3</experiments>
</comment>
<comment type="interaction">
    <interactant intactId="EBI-2682299">
        <id>Q96NC0</id>
    </interactant>
    <interactant intactId="EBI-79165">
        <id>Q9NRD5</id>
        <label>PICK1</label>
    </interactant>
    <organismsDiffer>false</organismsDiffer>
    <experiments>3</experiments>
</comment>
<comment type="interaction">
    <interactant intactId="EBI-2682299">
        <id>Q96NC0</id>
    </interactant>
    <interactant intactId="EBI-50433196">
        <id>A0A6Q8PF08</id>
        <label>PMP22</label>
    </interactant>
    <organismsDiffer>false</organismsDiffer>
    <experiments>3</experiments>
</comment>
<comment type="interaction">
    <interactant intactId="EBI-2682299">
        <id>Q96NC0</id>
    </interactant>
    <interactant intactId="EBI-752074">
        <id>P41219</id>
        <label>PRPH</label>
    </interactant>
    <organismsDiffer>false</organismsDiffer>
    <experiments>3</experiments>
</comment>
<comment type="interaction">
    <interactant intactId="EBI-2682299">
        <id>Q96NC0</id>
    </interactant>
    <interactant intactId="EBI-11047108">
        <id>P49768-2</id>
        <label>PSEN1</label>
    </interactant>
    <organismsDiffer>false</organismsDiffer>
    <experiments>6</experiments>
</comment>
<comment type="interaction">
    <interactant intactId="EBI-2682299">
        <id>Q96NC0</id>
    </interactant>
    <interactant intactId="EBI-2010251">
        <id>P49810</id>
        <label>PSEN2</label>
    </interactant>
    <organismsDiffer>false</organismsDiffer>
    <experiments>3</experiments>
</comment>
<comment type="interaction">
    <interactant intactId="EBI-2682299">
        <id>Q96NC0</id>
    </interactant>
    <interactant intactId="EBI-985879">
        <id>P37840</id>
        <label>SNCA</label>
    </interactant>
    <organismsDiffer>false</organismsDiffer>
    <experiments>3</experiments>
</comment>
<comment type="interaction">
    <interactant intactId="EBI-2682299">
        <id>Q96NC0</id>
    </interactant>
    <interactant intactId="EBI-990792">
        <id>P00441</id>
        <label>SOD1</label>
    </interactant>
    <organismsDiffer>false</organismsDiffer>
    <experiments>3</experiments>
</comment>
<comment type="interaction">
    <interactant intactId="EBI-2682299">
        <id>Q96NC0</id>
    </interactant>
    <interactant intactId="EBI-413317">
        <id>Q96R06</id>
        <label>SPAG5</label>
    </interactant>
    <organismsDiffer>false</organismsDiffer>
    <experiments>3</experiments>
</comment>
<comment type="interaction">
    <interactant intactId="EBI-2682299">
        <id>Q96NC0</id>
    </interactant>
    <interactant intactId="EBI-2212028">
        <id>Q9Y2D8</id>
        <label>SSX2IP</label>
    </interactant>
    <organismsDiffer>false</organismsDiffer>
    <experiments>3</experiments>
</comment>
<comment type="interaction">
    <interactant intactId="EBI-2682299">
        <id>Q96NC0</id>
    </interactant>
    <interactant intactId="EBI-1105213">
        <id>Q9UBB9</id>
        <label>TFIP11</label>
    </interactant>
    <organismsDiffer>false</organismsDiffer>
    <experiments>4</experiments>
</comment>
<comment type="interaction">
    <interactant intactId="EBI-2682299">
        <id>Q96NC0</id>
    </interactant>
    <interactant intactId="EBI-357849">
        <id>Q15025</id>
        <label>TNIP1</label>
    </interactant>
    <organismsDiffer>false</organismsDiffer>
    <experiments>3</experiments>
</comment>
<comment type="interaction">
    <interactant intactId="EBI-2682299">
        <id>Q96NC0</id>
    </interactant>
    <interactant intactId="EBI-355744">
        <id>Q12933</id>
        <label>TRAF2</label>
    </interactant>
    <organismsDiffer>false</organismsDiffer>
    <experiments>6</experiments>
</comment>
<comment type="interaction">
    <interactant intactId="EBI-2682299">
        <id>Q96NC0</id>
    </interactant>
    <interactant intactId="EBI-2341518">
        <id>Q9NQ86</id>
        <label>TRIM36</label>
    </interactant>
    <organismsDiffer>false</organismsDiffer>
    <experiments>3</experiments>
</comment>
<comment type="interaction">
    <interactant intactId="EBI-2682299">
        <id>Q96NC0</id>
    </interactant>
    <interactant intactId="EBI-741602">
        <id>O94972</id>
        <label>TRIM37</label>
    </interactant>
    <organismsDiffer>false</organismsDiffer>
    <experiments>3</experiments>
</comment>
<comment type="interaction">
    <interactant intactId="EBI-2682299">
        <id>Q96NC0</id>
    </interactant>
    <interactant intactId="EBI-372432">
        <id>Q8WW01</id>
        <label>TSEN15</label>
    </interactant>
    <organismsDiffer>false</organismsDiffer>
    <experiments>5</experiments>
</comment>
<comment type="interaction">
    <interactant intactId="EBI-2682299">
        <id>Q96NC0</id>
    </interactant>
    <interactant intactId="EBI-2799833">
        <id>Q8N1B4</id>
        <label>VPS52</label>
    </interactant>
    <organismsDiffer>false</organismsDiffer>
    <experiments>3</experiments>
</comment>
<comment type="interaction">
    <interactant intactId="EBI-2682299">
        <id>Q96NC0</id>
    </interactant>
    <interactant intactId="EBI-10176632">
        <id>O43829</id>
        <label>ZBTB14</label>
    </interactant>
    <organismsDiffer>false</organismsDiffer>
    <experiments>3</experiments>
</comment>
<comment type="interaction">
    <interactant intactId="EBI-2682299">
        <id>Q96NC0</id>
    </interactant>
    <interactant intactId="EBI-742740">
        <id>Q96BR9</id>
        <label>ZBTB8A</label>
    </interactant>
    <organismsDiffer>false</organismsDiffer>
    <experiments>3</experiments>
</comment>
<comment type="subcellular location">
    <subcellularLocation>
        <location evidence="2">Nucleus</location>
    </subcellularLocation>
</comment>
<feature type="initiator methionine" description="Removed" evidence="4">
    <location>
        <position position="1"/>
    </location>
</feature>
<feature type="chain" id="PRO_0000047327" description="Zinc finger matrin-type protein 2">
    <location>
        <begin position="2"/>
        <end position="199"/>
    </location>
</feature>
<feature type="zinc finger region" description="Matrin-type">
    <location>
        <begin position="80"/>
        <end position="104"/>
    </location>
</feature>
<feature type="region of interest" description="Disordered" evidence="1">
    <location>
        <begin position="27"/>
        <end position="46"/>
    </location>
</feature>
<feature type="region of interest" description="Disordered" evidence="1">
    <location>
        <begin position="150"/>
        <end position="175"/>
    </location>
</feature>
<feature type="compositionally biased region" description="Basic and acidic residues" evidence="1">
    <location>
        <begin position="150"/>
        <end position="173"/>
    </location>
</feature>
<feature type="modified residue" description="N-acetylalanine" evidence="4">
    <location>
        <position position="2"/>
    </location>
</feature>
<feature type="cross-link" description="Glycyl lysine isopeptide (Lys-Gly) (interchain with G-Cter in SUMO2)" evidence="6">
    <location>
        <position position="8"/>
    </location>
</feature>
<feature type="cross-link" description="Glycyl lysine isopeptide (Lys-Gly) (interchain with G-Cter in SUMO2)" evidence="6">
    <location>
        <position position="36"/>
    </location>
</feature>
<feature type="cross-link" description="Glycyl lysine isopeptide (Lys-Gly) (interchain with G-Cter in SUMO2)" evidence="6">
    <location>
        <position position="39"/>
    </location>
</feature>
<feature type="cross-link" description="Glycyl lysine isopeptide (Lys-Gly) (interchain with G-Cter in SUMO2)" evidence="5 6">
    <location>
        <position position="45"/>
    </location>
</feature>
<feature type="cross-link" description="Glycyl lysine isopeptide (Lys-Gly) (interchain with G-Cter in SUMO2)" evidence="6">
    <location>
        <position position="55"/>
    </location>
</feature>
<feature type="cross-link" description="Glycyl lysine isopeptide (Lys-Gly) (interchain with G-Cter in SUMO2)" evidence="6">
    <location>
        <position position="61"/>
    </location>
</feature>
<feature type="cross-link" description="Glycyl lysine isopeptide (Lys-Gly) (interchain with G-Cter in SUMO2)" evidence="5 6">
    <location>
        <position position="64"/>
    </location>
</feature>
<feature type="cross-link" description="Glycyl lysine isopeptide (Lys-Gly) (interchain with G-Cter in SUMO2)" evidence="6">
    <location>
        <position position="70"/>
    </location>
</feature>
<feature type="cross-link" description="Glycyl lysine isopeptide (Lys-Gly) (interchain with G-Cter in SUMO2)" evidence="6">
    <location>
        <position position="102"/>
    </location>
</feature>
<feature type="cross-link" description="Glycyl lysine isopeptide (Lys-Gly) (interchain with G-Cter in SUMO2)" evidence="6">
    <location>
        <position position="123"/>
    </location>
</feature>
<feature type="turn" evidence="7">
    <location>
        <begin position="58"/>
        <end position="61"/>
    </location>
</feature>
<feature type="strand" evidence="7">
    <location>
        <begin position="76"/>
        <end position="82"/>
    </location>
</feature>
<feature type="turn" evidence="7">
    <location>
        <begin position="83"/>
        <end position="86"/>
    </location>
</feature>
<feature type="strand" evidence="7">
    <location>
        <begin position="87"/>
        <end position="89"/>
    </location>
</feature>
<feature type="helix" evidence="7">
    <location>
        <begin position="92"/>
        <end position="99"/>
    </location>
</feature>
<feature type="helix" evidence="7">
    <location>
        <begin position="102"/>
        <end position="107"/>
    </location>
</feature>
<feature type="helix" evidence="7">
    <location>
        <begin position="119"/>
        <end position="132"/>
    </location>
</feature>
<keyword id="KW-0002">3D-structure</keyword>
<keyword id="KW-0007">Acetylation</keyword>
<keyword id="KW-0238">DNA-binding</keyword>
<keyword id="KW-1017">Isopeptide bond</keyword>
<keyword id="KW-0479">Metal-binding</keyword>
<keyword id="KW-0507">mRNA processing</keyword>
<keyword id="KW-0508">mRNA splicing</keyword>
<keyword id="KW-0539">Nucleus</keyword>
<keyword id="KW-1267">Proteomics identification</keyword>
<keyword id="KW-1185">Reference proteome</keyword>
<keyword id="KW-0747">Spliceosome</keyword>
<keyword id="KW-0832">Ubl conjugation</keyword>
<keyword id="KW-0862">Zinc</keyword>
<keyword id="KW-0863">Zinc-finger</keyword>
<accession>Q96NC0</accession>
<evidence type="ECO:0000256" key="1">
    <source>
        <dbReference type="SAM" id="MobiDB-lite"/>
    </source>
</evidence>
<evidence type="ECO:0000269" key="2">
    <source>
    </source>
</evidence>
<evidence type="ECO:0007744" key="3">
    <source>
        <dbReference type="PDB" id="5O9Z"/>
    </source>
</evidence>
<evidence type="ECO:0007744" key="4">
    <source>
    </source>
</evidence>
<evidence type="ECO:0007744" key="5">
    <source>
    </source>
</evidence>
<evidence type="ECO:0007744" key="6">
    <source>
    </source>
</evidence>
<evidence type="ECO:0007829" key="7">
    <source>
        <dbReference type="PDB" id="8Q7N"/>
    </source>
</evidence>
<organism>
    <name type="scientific">Homo sapiens</name>
    <name type="common">Human</name>
    <dbReference type="NCBI Taxonomy" id="9606"/>
    <lineage>
        <taxon>Eukaryota</taxon>
        <taxon>Metazoa</taxon>
        <taxon>Chordata</taxon>
        <taxon>Craniata</taxon>
        <taxon>Vertebrata</taxon>
        <taxon>Euteleostomi</taxon>
        <taxon>Mammalia</taxon>
        <taxon>Eutheria</taxon>
        <taxon>Euarchontoglires</taxon>
        <taxon>Primates</taxon>
        <taxon>Haplorrhini</taxon>
        <taxon>Catarrhini</taxon>
        <taxon>Hominidae</taxon>
        <taxon>Homo</taxon>
    </lineage>
</organism>